<feature type="chain" id="PRO_0000112383" description="N-acetyl-gamma-glutamyl-phosphate reductase">
    <location>
        <begin position="1"/>
        <end position="344"/>
    </location>
</feature>
<feature type="active site" evidence="1">
    <location>
        <position position="149"/>
    </location>
</feature>
<sequence>MEVGIIGATGYSGLELIRLLKNHPQVTNIMLYSSSQSGETINRLYPHLQNEQWKPLKEIDLNKISAEIDVMFLATPPGVSAEWSGPLLEAGLSVIDLSGDLRLTDRGVYEKWYKRPSAKEGLIEQAIYGLSEWNKSTIKTAKLIANPGCFPTAALLALIPLIQAGAIERDSIVIDAKSGTSGAGKSPTSMTHFSETNENFKIYQVASHKHTPEIEQQLAKWGAQPPLSFQPHLAPMVRGIMATIYAKAAKPLSNEWLTDCYNSAYENAPFVRIKENGTFPATKHVFGSNYCDIGFCYDERTGRVIVASVIDNLMKGAAGQAVQNFNLMHGFDETAGLEAVPMYP</sequence>
<dbReference type="EC" id="1.2.1.38" evidence="1"/>
<dbReference type="EMBL" id="AP006627">
    <property type="protein sequence ID" value="BAD65093.1"/>
    <property type="molecule type" value="Genomic_DNA"/>
</dbReference>
<dbReference type="RefSeq" id="WP_011247401.1">
    <property type="nucleotide sequence ID" value="NC_006582.1"/>
</dbReference>
<dbReference type="SMR" id="Q5WEW7"/>
<dbReference type="STRING" id="66692.ABC2558"/>
<dbReference type="KEGG" id="bcl:ABC2558"/>
<dbReference type="eggNOG" id="COG0002">
    <property type="taxonomic scope" value="Bacteria"/>
</dbReference>
<dbReference type="HOGENOM" id="CLU_006384_0_1_9"/>
<dbReference type="OrthoDB" id="9801289at2"/>
<dbReference type="UniPathway" id="UPA00068">
    <property type="reaction ID" value="UER00108"/>
</dbReference>
<dbReference type="Proteomes" id="UP000001168">
    <property type="component" value="Chromosome"/>
</dbReference>
<dbReference type="GO" id="GO:0005737">
    <property type="term" value="C:cytoplasm"/>
    <property type="evidence" value="ECO:0007669"/>
    <property type="project" value="UniProtKB-SubCell"/>
</dbReference>
<dbReference type="GO" id="GO:0003942">
    <property type="term" value="F:N-acetyl-gamma-glutamyl-phosphate reductase activity"/>
    <property type="evidence" value="ECO:0007669"/>
    <property type="project" value="UniProtKB-UniRule"/>
</dbReference>
<dbReference type="GO" id="GO:0051287">
    <property type="term" value="F:NAD binding"/>
    <property type="evidence" value="ECO:0007669"/>
    <property type="project" value="InterPro"/>
</dbReference>
<dbReference type="GO" id="GO:0070401">
    <property type="term" value="F:NADP+ binding"/>
    <property type="evidence" value="ECO:0007669"/>
    <property type="project" value="InterPro"/>
</dbReference>
<dbReference type="GO" id="GO:0006526">
    <property type="term" value="P:L-arginine biosynthetic process"/>
    <property type="evidence" value="ECO:0007669"/>
    <property type="project" value="UniProtKB-UniRule"/>
</dbReference>
<dbReference type="CDD" id="cd23934">
    <property type="entry name" value="AGPR_1_C"/>
    <property type="match status" value="1"/>
</dbReference>
<dbReference type="CDD" id="cd17895">
    <property type="entry name" value="AGPR_1_N"/>
    <property type="match status" value="1"/>
</dbReference>
<dbReference type="FunFam" id="3.30.360.10:FF:000014">
    <property type="entry name" value="N-acetyl-gamma-glutamyl-phosphate reductase"/>
    <property type="match status" value="1"/>
</dbReference>
<dbReference type="Gene3D" id="3.30.360.10">
    <property type="entry name" value="Dihydrodipicolinate Reductase, domain 2"/>
    <property type="match status" value="1"/>
</dbReference>
<dbReference type="Gene3D" id="3.40.50.720">
    <property type="entry name" value="NAD(P)-binding Rossmann-like Domain"/>
    <property type="match status" value="1"/>
</dbReference>
<dbReference type="HAMAP" id="MF_00150">
    <property type="entry name" value="ArgC_type1"/>
    <property type="match status" value="1"/>
</dbReference>
<dbReference type="InterPro" id="IPR023013">
    <property type="entry name" value="AGPR_AS"/>
</dbReference>
<dbReference type="InterPro" id="IPR000706">
    <property type="entry name" value="AGPR_type-1"/>
</dbReference>
<dbReference type="InterPro" id="IPR036291">
    <property type="entry name" value="NAD(P)-bd_dom_sf"/>
</dbReference>
<dbReference type="InterPro" id="IPR050085">
    <property type="entry name" value="NAGSA_dehydrogenase"/>
</dbReference>
<dbReference type="InterPro" id="IPR000534">
    <property type="entry name" value="Semialdehyde_DH_NAD-bd"/>
</dbReference>
<dbReference type="NCBIfam" id="TIGR01850">
    <property type="entry name" value="argC"/>
    <property type="match status" value="1"/>
</dbReference>
<dbReference type="PANTHER" id="PTHR32338:SF10">
    <property type="entry name" value="N-ACETYL-GAMMA-GLUTAMYL-PHOSPHATE REDUCTASE, CHLOROPLASTIC-RELATED"/>
    <property type="match status" value="1"/>
</dbReference>
<dbReference type="PANTHER" id="PTHR32338">
    <property type="entry name" value="N-ACETYL-GAMMA-GLUTAMYL-PHOSPHATE REDUCTASE, CHLOROPLASTIC-RELATED-RELATED"/>
    <property type="match status" value="1"/>
</dbReference>
<dbReference type="Pfam" id="PF01118">
    <property type="entry name" value="Semialdhyde_dh"/>
    <property type="match status" value="1"/>
</dbReference>
<dbReference type="Pfam" id="PF22698">
    <property type="entry name" value="Semialdhyde_dhC_1"/>
    <property type="match status" value="1"/>
</dbReference>
<dbReference type="SMART" id="SM00859">
    <property type="entry name" value="Semialdhyde_dh"/>
    <property type="match status" value="1"/>
</dbReference>
<dbReference type="SUPFAM" id="SSF55347">
    <property type="entry name" value="Glyceraldehyde-3-phosphate dehydrogenase-like, C-terminal domain"/>
    <property type="match status" value="1"/>
</dbReference>
<dbReference type="SUPFAM" id="SSF51735">
    <property type="entry name" value="NAD(P)-binding Rossmann-fold domains"/>
    <property type="match status" value="1"/>
</dbReference>
<dbReference type="PROSITE" id="PS01224">
    <property type="entry name" value="ARGC"/>
    <property type="match status" value="1"/>
</dbReference>
<comment type="function">
    <text evidence="1">Catalyzes the NADPH-dependent reduction of N-acetyl-5-glutamyl phosphate to yield N-acetyl-L-glutamate 5-semialdehyde.</text>
</comment>
<comment type="catalytic activity">
    <reaction evidence="1">
        <text>N-acetyl-L-glutamate 5-semialdehyde + phosphate + NADP(+) = N-acetyl-L-glutamyl 5-phosphate + NADPH + H(+)</text>
        <dbReference type="Rhea" id="RHEA:21588"/>
        <dbReference type="ChEBI" id="CHEBI:15378"/>
        <dbReference type="ChEBI" id="CHEBI:29123"/>
        <dbReference type="ChEBI" id="CHEBI:43474"/>
        <dbReference type="ChEBI" id="CHEBI:57783"/>
        <dbReference type="ChEBI" id="CHEBI:57936"/>
        <dbReference type="ChEBI" id="CHEBI:58349"/>
        <dbReference type="EC" id="1.2.1.38"/>
    </reaction>
</comment>
<comment type="pathway">
    <text evidence="1">Amino-acid biosynthesis; L-arginine biosynthesis; N(2)-acetyl-L-ornithine from L-glutamate: step 3/4.</text>
</comment>
<comment type="subcellular location">
    <subcellularLocation>
        <location evidence="1">Cytoplasm</location>
    </subcellularLocation>
</comment>
<comment type="similarity">
    <text evidence="1">Belongs to the NAGSA dehydrogenase family. Type 1 subfamily.</text>
</comment>
<protein>
    <recommendedName>
        <fullName evidence="1">N-acetyl-gamma-glutamyl-phosphate reductase</fullName>
        <shortName evidence="1">AGPR</shortName>
        <ecNumber evidence="1">1.2.1.38</ecNumber>
    </recommendedName>
    <alternativeName>
        <fullName evidence="1">N-acetyl-glutamate semialdehyde dehydrogenase</fullName>
        <shortName evidence="1">NAGSA dehydrogenase</shortName>
    </alternativeName>
</protein>
<name>ARGC_SHOC1</name>
<keyword id="KW-0028">Amino-acid biosynthesis</keyword>
<keyword id="KW-0055">Arginine biosynthesis</keyword>
<keyword id="KW-0963">Cytoplasm</keyword>
<keyword id="KW-0521">NADP</keyword>
<keyword id="KW-0560">Oxidoreductase</keyword>
<keyword id="KW-1185">Reference proteome</keyword>
<accession>Q5WEW7</accession>
<organism>
    <name type="scientific">Shouchella clausii (strain KSM-K16)</name>
    <name type="common">Alkalihalobacillus clausii</name>
    <dbReference type="NCBI Taxonomy" id="66692"/>
    <lineage>
        <taxon>Bacteria</taxon>
        <taxon>Bacillati</taxon>
        <taxon>Bacillota</taxon>
        <taxon>Bacilli</taxon>
        <taxon>Bacillales</taxon>
        <taxon>Bacillaceae</taxon>
        <taxon>Shouchella</taxon>
    </lineage>
</organism>
<evidence type="ECO:0000255" key="1">
    <source>
        <dbReference type="HAMAP-Rule" id="MF_00150"/>
    </source>
</evidence>
<reference key="1">
    <citation type="submission" date="2003-10" db="EMBL/GenBank/DDBJ databases">
        <title>The complete genome sequence of the alkaliphilic Bacillus clausii KSM-K16.</title>
        <authorList>
            <person name="Takaki Y."/>
            <person name="Kageyama Y."/>
            <person name="Shimamura S."/>
            <person name="Suzuki H."/>
            <person name="Nishi S."/>
            <person name="Hatada Y."/>
            <person name="Kawai S."/>
            <person name="Ito S."/>
            <person name="Horikoshi K."/>
        </authorList>
    </citation>
    <scope>NUCLEOTIDE SEQUENCE [LARGE SCALE GENOMIC DNA]</scope>
    <source>
        <strain>KSM-K16</strain>
    </source>
</reference>
<proteinExistence type="inferred from homology"/>
<gene>
    <name evidence="1" type="primary">argC</name>
    <name type="ordered locus">ABC2558</name>
</gene>